<accession>A7FNV6</accession>
<name>FEOC_YERP3</name>
<gene>
    <name evidence="1" type="primary">feoC</name>
    <name type="ordered locus">YpsIP31758_3986</name>
</gene>
<dbReference type="EMBL" id="CP000720">
    <property type="protein sequence ID" value="ABS47293.1"/>
    <property type="molecule type" value="Genomic_DNA"/>
</dbReference>
<dbReference type="RefSeq" id="WP_002208920.1">
    <property type="nucleotide sequence ID" value="NC_009708.1"/>
</dbReference>
<dbReference type="SMR" id="A7FNV6"/>
<dbReference type="KEGG" id="ypi:YpsIP31758_3986"/>
<dbReference type="HOGENOM" id="CLU_189182_0_0_6"/>
<dbReference type="Proteomes" id="UP000002412">
    <property type="component" value="Chromosome"/>
</dbReference>
<dbReference type="GO" id="GO:0003677">
    <property type="term" value="F:DNA binding"/>
    <property type="evidence" value="ECO:0007669"/>
    <property type="project" value="UniProtKB-KW"/>
</dbReference>
<dbReference type="GO" id="GO:0005506">
    <property type="term" value="F:iron ion binding"/>
    <property type="evidence" value="ECO:0007669"/>
    <property type="project" value="UniProtKB-UniRule"/>
</dbReference>
<dbReference type="GO" id="GO:0051536">
    <property type="term" value="F:iron-sulfur cluster binding"/>
    <property type="evidence" value="ECO:0007669"/>
    <property type="project" value="UniProtKB-KW"/>
</dbReference>
<dbReference type="Gene3D" id="1.10.10.10">
    <property type="entry name" value="Winged helix-like DNA-binding domain superfamily/Winged helix DNA-binding domain"/>
    <property type="match status" value="1"/>
</dbReference>
<dbReference type="HAMAP" id="MF_01586">
    <property type="entry name" value="FeoC"/>
    <property type="match status" value="1"/>
</dbReference>
<dbReference type="InterPro" id="IPR023732">
    <property type="entry name" value="FeoC"/>
</dbReference>
<dbReference type="InterPro" id="IPR015102">
    <property type="entry name" value="Tscrpt_reg_HTH_FeoC"/>
</dbReference>
<dbReference type="InterPro" id="IPR036388">
    <property type="entry name" value="WH-like_DNA-bd_sf"/>
</dbReference>
<dbReference type="InterPro" id="IPR036390">
    <property type="entry name" value="WH_DNA-bd_sf"/>
</dbReference>
<dbReference type="Pfam" id="PF09012">
    <property type="entry name" value="FeoC"/>
    <property type="match status" value="1"/>
</dbReference>
<dbReference type="SUPFAM" id="SSF46785">
    <property type="entry name" value="Winged helix' DNA-binding domain"/>
    <property type="match status" value="1"/>
</dbReference>
<keyword id="KW-0238">DNA-binding</keyword>
<keyword id="KW-0408">Iron</keyword>
<keyword id="KW-0411">Iron-sulfur</keyword>
<keyword id="KW-0479">Metal-binding</keyword>
<keyword id="KW-0678">Repressor</keyword>
<keyword id="KW-0804">Transcription</keyword>
<keyword id="KW-0805">Transcription regulation</keyword>
<reference key="1">
    <citation type="journal article" date="2007" name="PLoS Genet.">
        <title>The complete genome sequence of Yersinia pseudotuberculosis IP31758, the causative agent of Far East scarlet-like fever.</title>
        <authorList>
            <person name="Eppinger M."/>
            <person name="Rosovitz M.J."/>
            <person name="Fricke W.F."/>
            <person name="Rasko D.A."/>
            <person name="Kokorina G."/>
            <person name="Fayolle C."/>
            <person name="Lindler L.E."/>
            <person name="Carniel E."/>
            <person name="Ravel J."/>
        </authorList>
    </citation>
    <scope>NUCLEOTIDE SEQUENCE [LARGE SCALE GENOMIC DNA]</scope>
    <source>
        <strain>IP 31758</strain>
    </source>
</reference>
<sequence>MASLLQLRDAIALNGSAEASQLSRQLAIPLPLVNAMLEKLTAMGKIERIELDHSGCLTGSCKSCPEGHQHCNTVIYQLKEPHAHQ</sequence>
<proteinExistence type="inferred from homology"/>
<comment type="function">
    <text evidence="1">May function as a transcriptional regulator that controls feoABC expression.</text>
</comment>
<comment type="similarity">
    <text evidence="1">Belongs to the FeoC family.</text>
</comment>
<feature type="chain" id="PRO_1000069318" description="Probable [Fe-S]-dependent transcriptional repressor">
    <location>
        <begin position="1"/>
        <end position="85"/>
    </location>
</feature>
<feature type="binding site" evidence="1">
    <location>
        <position position="56"/>
    </location>
    <ligand>
        <name>iron-sulfur cluster</name>
        <dbReference type="ChEBI" id="CHEBI:30408"/>
    </ligand>
</feature>
<feature type="binding site" evidence="1">
    <location>
        <position position="61"/>
    </location>
    <ligand>
        <name>iron-sulfur cluster</name>
        <dbReference type="ChEBI" id="CHEBI:30408"/>
    </ligand>
</feature>
<feature type="binding site" evidence="1">
    <location>
        <position position="64"/>
    </location>
    <ligand>
        <name>iron-sulfur cluster</name>
        <dbReference type="ChEBI" id="CHEBI:30408"/>
    </ligand>
</feature>
<feature type="binding site" evidence="1">
    <location>
        <position position="71"/>
    </location>
    <ligand>
        <name>iron-sulfur cluster</name>
        <dbReference type="ChEBI" id="CHEBI:30408"/>
    </ligand>
</feature>
<organism>
    <name type="scientific">Yersinia pseudotuberculosis serotype O:1b (strain IP 31758)</name>
    <dbReference type="NCBI Taxonomy" id="349747"/>
    <lineage>
        <taxon>Bacteria</taxon>
        <taxon>Pseudomonadati</taxon>
        <taxon>Pseudomonadota</taxon>
        <taxon>Gammaproteobacteria</taxon>
        <taxon>Enterobacterales</taxon>
        <taxon>Yersiniaceae</taxon>
        <taxon>Yersinia</taxon>
    </lineage>
</organism>
<evidence type="ECO:0000255" key="1">
    <source>
        <dbReference type="HAMAP-Rule" id="MF_01586"/>
    </source>
</evidence>
<protein>
    <recommendedName>
        <fullName evidence="1">Probable [Fe-S]-dependent transcriptional repressor</fullName>
    </recommendedName>
</protein>